<gene>
    <name evidence="1" type="primary">atpE</name>
    <name type="ordered locus">Bfl003</name>
</gene>
<feature type="chain" id="PRO_1000184340" description="ATP synthase subunit c">
    <location>
        <begin position="1"/>
        <end position="79"/>
    </location>
</feature>
<feature type="transmembrane region" description="Helical" evidence="1">
    <location>
        <begin position="11"/>
        <end position="31"/>
    </location>
</feature>
<feature type="transmembrane region" description="Helical" evidence="1">
    <location>
        <begin position="53"/>
        <end position="73"/>
    </location>
</feature>
<feature type="site" description="Reversibly protonated during proton transport" evidence="1">
    <location>
        <position position="61"/>
    </location>
</feature>
<proteinExistence type="inferred from homology"/>
<organism>
    <name type="scientific">Blochmanniella floridana</name>
    <dbReference type="NCBI Taxonomy" id="203907"/>
    <lineage>
        <taxon>Bacteria</taxon>
        <taxon>Pseudomonadati</taxon>
        <taxon>Pseudomonadota</taxon>
        <taxon>Gammaproteobacteria</taxon>
        <taxon>Enterobacterales</taxon>
        <taxon>Enterobacteriaceae</taxon>
        <taxon>ant endosymbionts</taxon>
        <taxon>Candidatus Blochmanniella</taxon>
    </lineage>
</organism>
<comment type="function">
    <text evidence="1">F(1)F(0) ATP synthase produces ATP from ADP in the presence of a proton or sodium gradient. F-type ATPases consist of two structural domains, F(1) containing the extramembraneous catalytic core and F(0) containing the membrane proton channel, linked together by a central stalk and a peripheral stalk. During catalysis, ATP synthesis in the catalytic domain of F(1) is coupled via a rotary mechanism of the central stalk subunits to proton translocation.</text>
</comment>
<comment type="function">
    <text evidence="1">Key component of the F(0) channel; it plays a direct role in translocation across the membrane. A homomeric c-ring of between 10-14 subunits forms the central stalk rotor element with the F(1) delta and epsilon subunits.</text>
</comment>
<comment type="subunit">
    <text evidence="1">F-type ATPases have 2 components, F(1) - the catalytic core - and F(0) - the membrane proton channel. F(1) has five subunits: alpha(3), beta(3), gamma(1), delta(1), epsilon(1). F(0) has three main subunits: a(1), b(2) and c(10-14). The alpha and beta chains form an alternating ring which encloses part of the gamma chain. F(1) is attached to F(0) by a central stalk formed by the gamma and epsilon chains, while a peripheral stalk is formed by the delta and b chains.</text>
</comment>
<comment type="subcellular location">
    <subcellularLocation>
        <location evidence="1">Cell inner membrane</location>
        <topology evidence="1">Multi-pass membrane protein</topology>
    </subcellularLocation>
</comment>
<comment type="similarity">
    <text evidence="1">Belongs to the ATPase C chain family.</text>
</comment>
<evidence type="ECO:0000255" key="1">
    <source>
        <dbReference type="HAMAP-Rule" id="MF_01396"/>
    </source>
</evidence>
<accession>Q7VQW1</accession>
<dbReference type="EMBL" id="BX248583">
    <property type="protein sequence ID" value="CAD83531.1"/>
    <property type="molecule type" value="Genomic_DNA"/>
</dbReference>
<dbReference type="SMR" id="Q7VQW1"/>
<dbReference type="STRING" id="203907.Bfl003"/>
<dbReference type="KEGG" id="bfl:Bfl003"/>
<dbReference type="eggNOG" id="ENOG5032S3K">
    <property type="taxonomic scope" value="Bacteria"/>
</dbReference>
<dbReference type="HOGENOM" id="CLU_148047_1_0_6"/>
<dbReference type="OrthoDB" id="9811659at2"/>
<dbReference type="Proteomes" id="UP000002192">
    <property type="component" value="Chromosome"/>
</dbReference>
<dbReference type="GO" id="GO:0005886">
    <property type="term" value="C:plasma membrane"/>
    <property type="evidence" value="ECO:0007669"/>
    <property type="project" value="UniProtKB-SubCell"/>
</dbReference>
<dbReference type="GO" id="GO:0045259">
    <property type="term" value="C:proton-transporting ATP synthase complex"/>
    <property type="evidence" value="ECO:0007669"/>
    <property type="project" value="UniProtKB-KW"/>
</dbReference>
<dbReference type="GO" id="GO:0033177">
    <property type="term" value="C:proton-transporting two-sector ATPase complex, proton-transporting domain"/>
    <property type="evidence" value="ECO:0007669"/>
    <property type="project" value="InterPro"/>
</dbReference>
<dbReference type="GO" id="GO:0008289">
    <property type="term" value="F:lipid binding"/>
    <property type="evidence" value="ECO:0007669"/>
    <property type="project" value="UniProtKB-KW"/>
</dbReference>
<dbReference type="GO" id="GO:0046933">
    <property type="term" value="F:proton-transporting ATP synthase activity, rotational mechanism"/>
    <property type="evidence" value="ECO:0007669"/>
    <property type="project" value="UniProtKB-UniRule"/>
</dbReference>
<dbReference type="CDD" id="cd18185">
    <property type="entry name" value="ATP-synt_Fo_c_ATPE"/>
    <property type="match status" value="1"/>
</dbReference>
<dbReference type="FunFam" id="1.20.20.10:FF:000002">
    <property type="entry name" value="ATP synthase subunit c"/>
    <property type="match status" value="1"/>
</dbReference>
<dbReference type="Gene3D" id="1.20.20.10">
    <property type="entry name" value="F1F0 ATP synthase subunit C"/>
    <property type="match status" value="1"/>
</dbReference>
<dbReference type="HAMAP" id="MF_01396">
    <property type="entry name" value="ATP_synth_c_bact"/>
    <property type="match status" value="1"/>
</dbReference>
<dbReference type="InterPro" id="IPR005953">
    <property type="entry name" value="ATP_synth_csu_bac/chlpt"/>
</dbReference>
<dbReference type="InterPro" id="IPR000454">
    <property type="entry name" value="ATP_synth_F0_csu"/>
</dbReference>
<dbReference type="InterPro" id="IPR020537">
    <property type="entry name" value="ATP_synth_F0_csu_DDCD_BS"/>
</dbReference>
<dbReference type="InterPro" id="IPR038662">
    <property type="entry name" value="ATP_synth_F0_csu_sf"/>
</dbReference>
<dbReference type="InterPro" id="IPR002379">
    <property type="entry name" value="ATPase_proteolipid_c-like_dom"/>
</dbReference>
<dbReference type="InterPro" id="IPR035921">
    <property type="entry name" value="F/V-ATP_Csub_sf"/>
</dbReference>
<dbReference type="NCBIfam" id="TIGR01260">
    <property type="entry name" value="ATP_synt_c"/>
    <property type="match status" value="1"/>
</dbReference>
<dbReference type="NCBIfam" id="NF005363">
    <property type="entry name" value="PRK06876.1"/>
    <property type="match status" value="1"/>
</dbReference>
<dbReference type="Pfam" id="PF00137">
    <property type="entry name" value="ATP-synt_C"/>
    <property type="match status" value="1"/>
</dbReference>
<dbReference type="PRINTS" id="PR00124">
    <property type="entry name" value="ATPASEC"/>
</dbReference>
<dbReference type="SUPFAM" id="SSF81333">
    <property type="entry name" value="F1F0 ATP synthase subunit C"/>
    <property type="match status" value="1"/>
</dbReference>
<dbReference type="PROSITE" id="PS00605">
    <property type="entry name" value="ATPASE_C"/>
    <property type="match status" value="1"/>
</dbReference>
<sequence>MENLNIDMLYIAAAIMMGLSAIGAAVGIGILGSKFLEGAARQPDLVPLLRTQFFIVMGLVDAIPMITVGLSLYVMFAVV</sequence>
<protein>
    <recommendedName>
        <fullName evidence="1">ATP synthase subunit c</fullName>
    </recommendedName>
    <alternativeName>
        <fullName evidence="1">ATP synthase F(0) sector subunit c</fullName>
    </alternativeName>
    <alternativeName>
        <fullName evidence="1">F-type ATPase subunit c</fullName>
        <shortName evidence="1">F-ATPase subunit c</shortName>
    </alternativeName>
    <alternativeName>
        <fullName evidence="1">Lipid-binding protein</fullName>
    </alternativeName>
</protein>
<name>ATPL_BLOFL</name>
<reference key="1">
    <citation type="journal article" date="2003" name="Proc. Natl. Acad. Sci. U.S.A.">
        <title>The genome sequence of Blochmannia floridanus: comparative analysis of reduced genomes.</title>
        <authorList>
            <person name="Gil R."/>
            <person name="Silva F.J."/>
            <person name="Zientz E."/>
            <person name="Delmotte F."/>
            <person name="Gonzalez-Candelas F."/>
            <person name="Latorre A."/>
            <person name="Rausell C."/>
            <person name="Kamerbeek J."/>
            <person name="Gadau J."/>
            <person name="Hoelldobler B."/>
            <person name="van Ham R.C.H.J."/>
            <person name="Gross R."/>
            <person name="Moya A."/>
        </authorList>
    </citation>
    <scope>NUCLEOTIDE SEQUENCE [LARGE SCALE GENOMIC DNA]</scope>
</reference>
<keyword id="KW-0066">ATP synthesis</keyword>
<keyword id="KW-0997">Cell inner membrane</keyword>
<keyword id="KW-1003">Cell membrane</keyword>
<keyword id="KW-0138">CF(0)</keyword>
<keyword id="KW-0375">Hydrogen ion transport</keyword>
<keyword id="KW-0406">Ion transport</keyword>
<keyword id="KW-0446">Lipid-binding</keyword>
<keyword id="KW-0472">Membrane</keyword>
<keyword id="KW-1185">Reference proteome</keyword>
<keyword id="KW-0812">Transmembrane</keyword>
<keyword id="KW-1133">Transmembrane helix</keyword>
<keyword id="KW-0813">Transport</keyword>